<dbReference type="EC" id="2.1.1.220"/>
<dbReference type="EMBL" id="AAEY01000056">
    <property type="protein sequence ID" value="EAL17877.1"/>
    <property type="molecule type" value="Genomic_DNA"/>
</dbReference>
<dbReference type="RefSeq" id="XP_772524.1">
    <property type="nucleotide sequence ID" value="XM_767431.1"/>
</dbReference>
<dbReference type="SMR" id="P0CS09"/>
<dbReference type="EnsemblFungi" id="AAW45025">
    <property type="protein sequence ID" value="AAW45025"/>
    <property type="gene ID" value="CNH01430"/>
</dbReference>
<dbReference type="GeneID" id="4939188"/>
<dbReference type="KEGG" id="cnb:CNBL1390"/>
<dbReference type="VEuPathDB" id="FungiDB:CNBL1390"/>
<dbReference type="HOGENOM" id="CLU_025402_4_0_1"/>
<dbReference type="OrthoDB" id="2952at5206"/>
<dbReference type="GO" id="GO:0005634">
    <property type="term" value="C:nucleus"/>
    <property type="evidence" value="ECO:0007669"/>
    <property type="project" value="UniProtKB-SubCell"/>
</dbReference>
<dbReference type="GO" id="GO:0031515">
    <property type="term" value="C:tRNA (m1A) methyltransferase complex"/>
    <property type="evidence" value="ECO:0007669"/>
    <property type="project" value="EnsemblFungi"/>
</dbReference>
<dbReference type="GO" id="GO:0160107">
    <property type="term" value="F:tRNA (adenine(58)-N1)-methyltransferase activity"/>
    <property type="evidence" value="ECO:0007669"/>
    <property type="project" value="UniProtKB-EC"/>
</dbReference>
<dbReference type="GO" id="GO:0030488">
    <property type="term" value="P:tRNA methylation"/>
    <property type="evidence" value="ECO:0007669"/>
    <property type="project" value="EnsemblFungi"/>
</dbReference>
<dbReference type="FunFam" id="3.10.330.20:FF:000007">
    <property type="entry name" value="tRNA (adenine(58)-N(1))-methyltransferase catalytic subunit TRM61"/>
    <property type="match status" value="1"/>
</dbReference>
<dbReference type="FunFam" id="3.40.50.150:FF:000247">
    <property type="entry name" value="tRNA (adenine(58)-N(1))-methyltransferase catalytic subunit TRM61"/>
    <property type="match status" value="1"/>
</dbReference>
<dbReference type="Gene3D" id="3.10.330.20">
    <property type="match status" value="1"/>
</dbReference>
<dbReference type="Gene3D" id="3.40.50.150">
    <property type="entry name" value="Vaccinia Virus protein VP39"/>
    <property type="match status" value="1"/>
</dbReference>
<dbReference type="InterPro" id="IPR029063">
    <property type="entry name" value="SAM-dependent_MTases_sf"/>
</dbReference>
<dbReference type="InterPro" id="IPR049470">
    <property type="entry name" value="TRM61_C"/>
</dbReference>
<dbReference type="InterPro" id="IPR014816">
    <property type="entry name" value="tRNA_MeTrfase_Gcd14"/>
</dbReference>
<dbReference type="PANTHER" id="PTHR12133">
    <property type="entry name" value="TRNA (ADENINE(58)-N(1))-METHYLTRANSFERASE"/>
    <property type="match status" value="1"/>
</dbReference>
<dbReference type="PANTHER" id="PTHR12133:SF2">
    <property type="entry name" value="TRNA (ADENINE(58)-N(1))-METHYLTRANSFERASE CATALYTIC SUBUNIT TRMT61A"/>
    <property type="match status" value="1"/>
</dbReference>
<dbReference type="Pfam" id="PF08704">
    <property type="entry name" value="GCD14"/>
    <property type="match status" value="1"/>
</dbReference>
<dbReference type="Pfam" id="PF14801">
    <property type="entry name" value="TrmI-like_N"/>
    <property type="match status" value="1"/>
</dbReference>
<dbReference type="SUPFAM" id="SSF53335">
    <property type="entry name" value="S-adenosyl-L-methionine-dependent methyltransferases"/>
    <property type="match status" value="1"/>
</dbReference>
<dbReference type="PROSITE" id="PS51620">
    <property type="entry name" value="SAM_TRM61"/>
    <property type="match status" value="1"/>
</dbReference>
<comment type="function">
    <text evidence="1">Catalytic subunit of tRNA (adenine-N(1)-)-methyltransferase, which catalyzes the formation of N(1)-methyladenine at position 58 (m1A58) in initiator methionyl-tRNA.</text>
</comment>
<comment type="catalytic activity">
    <reaction evidence="3">
        <text>adenosine(58) in tRNA + S-adenosyl-L-methionine = N(1)-methyladenosine(58) in tRNA + S-adenosyl-L-homocysteine + H(+)</text>
        <dbReference type="Rhea" id="RHEA:43152"/>
        <dbReference type="Rhea" id="RHEA-COMP:10365"/>
        <dbReference type="Rhea" id="RHEA-COMP:10366"/>
        <dbReference type="ChEBI" id="CHEBI:15378"/>
        <dbReference type="ChEBI" id="CHEBI:57856"/>
        <dbReference type="ChEBI" id="CHEBI:59789"/>
        <dbReference type="ChEBI" id="CHEBI:74411"/>
        <dbReference type="ChEBI" id="CHEBI:74491"/>
        <dbReference type="EC" id="2.1.1.220"/>
    </reaction>
</comment>
<comment type="subunit">
    <text evidence="1">Heterotetramer; composed of two copies of TRM6 and two copies of TRM61.</text>
</comment>
<comment type="subcellular location">
    <subcellularLocation>
        <location evidence="1">Nucleus</location>
    </subcellularLocation>
</comment>
<comment type="similarity">
    <text evidence="3">Belongs to the class I-like SAM-binding methyltransferase superfamily. TRM61 family.</text>
</comment>
<keyword id="KW-0489">Methyltransferase</keyword>
<keyword id="KW-0539">Nucleus</keyword>
<keyword id="KW-0949">S-adenosyl-L-methionine</keyword>
<keyword id="KW-0808">Transferase</keyword>
<keyword id="KW-0819">tRNA processing</keyword>
<proteinExistence type="inferred from homology"/>
<protein>
    <recommendedName>
        <fullName>tRNA (adenine(58)-N(1))-methyltransferase catalytic subunit TRM61</fullName>
        <ecNumber>2.1.1.220</ecNumber>
    </recommendedName>
    <alternativeName>
        <fullName>tRNA(m1A58)-methyltransferase subunit TRM61</fullName>
        <shortName>tRNA(m1A58)MTase subunit TRM61</shortName>
    </alternativeName>
</protein>
<gene>
    <name type="primary">TRM61</name>
    <name type="ordered locus">CNBL1390</name>
</gene>
<evidence type="ECO:0000250" key="1">
    <source>
        <dbReference type="UniProtKB" id="P46959"/>
    </source>
</evidence>
<evidence type="ECO:0000250" key="2">
    <source>
        <dbReference type="UniProtKB" id="Q96FX7"/>
    </source>
</evidence>
<evidence type="ECO:0000255" key="3">
    <source>
        <dbReference type="PROSITE-ProRule" id="PRU00952"/>
    </source>
</evidence>
<evidence type="ECO:0000256" key="4">
    <source>
        <dbReference type="SAM" id="MobiDB-lite"/>
    </source>
</evidence>
<feature type="chain" id="PRO_0000410316" description="tRNA (adenine(58)-N(1))-methyltransferase catalytic subunit TRM61">
    <location>
        <begin position="1"/>
        <end position="433"/>
    </location>
</feature>
<feature type="region of interest" description="Disordered" evidence="4">
    <location>
        <begin position="295"/>
        <end position="353"/>
    </location>
</feature>
<feature type="region of interest" description="Disordered" evidence="4">
    <location>
        <begin position="380"/>
        <end position="409"/>
    </location>
</feature>
<feature type="compositionally biased region" description="Polar residues" evidence="4">
    <location>
        <begin position="328"/>
        <end position="348"/>
    </location>
</feature>
<feature type="compositionally biased region" description="Polar residues" evidence="4">
    <location>
        <begin position="380"/>
        <end position="391"/>
    </location>
</feature>
<feature type="compositionally biased region" description="Basic and acidic residues" evidence="4">
    <location>
        <begin position="394"/>
        <end position="409"/>
    </location>
</feature>
<feature type="binding site" evidence="2">
    <location>
        <position position="92"/>
    </location>
    <ligand>
        <name>S-adenosyl-L-methionine</name>
        <dbReference type="ChEBI" id="CHEBI:59789"/>
    </ligand>
</feature>
<feature type="binding site" evidence="2">
    <location>
        <begin position="119"/>
        <end position="121"/>
    </location>
    <ligand>
        <name>S-adenosyl-L-methionine</name>
        <dbReference type="ChEBI" id="CHEBI:59789"/>
    </ligand>
</feature>
<feature type="binding site" evidence="2 3">
    <location>
        <position position="140"/>
    </location>
    <ligand>
        <name>S-adenosyl-L-methionine</name>
        <dbReference type="ChEBI" id="CHEBI:59789"/>
    </ligand>
</feature>
<feature type="binding site" evidence="2">
    <location>
        <position position="145"/>
    </location>
    <ligand>
        <name>S-adenosyl-L-methionine</name>
        <dbReference type="ChEBI" id="CHEBI:59789"/>
    </ligand>
</feature>
<feature type="binding site" evidence="2">
    <location>
        <begin position="167"/>
        <end position="168"/>
    </location>
    <ligand>
        <name>S-adenosyl-L-methionine</name>
        <dbReference type="ChEBI" id="CHEBI:59789"/>
    </ligand>
</feature>
<feature type="binding site" evidence="2 3">
    <location>
        <position position="185"/>
    </location>
    <ligand>
        <name>S-adenosyl-L-methionine</name>
        <dbReference type="ChEBI" id="CHEBI:59789"/>
    </ligand>
</feature>
<sequence length="433" mass="48397">MDIRKPMFHSRVHIEAGDIVILYMARDNMTAITITPGETFHNKYGRYPHDMLIGQKYGSKIHSPPPHPGYVHVLRPTPELWTLSLPHRTQILYLPDISYITMRLGVRVGGKVIEAGTGSGSMTHSLSRSVGPSGQVMSFEYHRQRFETALKEFESHGLTNVRLQHRNVCKEGFGDAQGVEGVFLDLPAPWEAIPHAVKALRRDIITRICCFSPCLEQVLKTVTCLRSEGFSDISTQEVLIRTHELVTPPPNTTYLSSISSVVSYLREHEQRKEERRLLQIKTAKENNRKVKGIEADDAIPVEGETGSKRKLEQPSVTGSDNAAPANSRPKTNLLWTEPPNTLPSTVLTKPSPEMKGHTSYLTFAILYPESVRLSMVAQETSSRVETPTNITKAPETHSQETHYSEGSEIEKIGAMTSKEMDDWMKSGSTSLSI</sequence>
<organism>
    <name type="scientific">Cryptococcus neoformans var. neoformans serotype D (strain B-3501A)</name>
    <name type="common">Filobasidiella neoformans</name>
    <dbReference type="NCBI Taxonomy" id="283643"/>
    <lineage>
        <taxon>Eukaryota</taxon>
        <taxon>Fungi</taxon>
        <taxon>Dikarya</taxon>
        <taxon>Basidiomycota</taxon>
        <taxon>Agaricomycotina</taxon>
        <taxon>Tremellomycetes</taxon>
        <taxon>Tremellales</taxon>
        <taxon>Cryptococcaceae</taxon>
        <taxon>Cryptococcus</taxon>
        <taxon>Cryptococcus neoformans species complex</taxon>
    </lineage>
</organism>
<name>TRM61_CRYNB</name>
<accession>P0CS09</accession>
<accession>Q55J46</accession>
<accession>Q5KCL4</accession>
<reference key="1">
    <citation type="journal article" date="2005" name="Science">
        <title>The genome of the basidiomycetous yeast and human pathogen Cryptococcus neoformans.</title>
        <authorList>
            <person name="Loftus B.J."/>
            <person name="Fung E."/>
            <person name="Roncaglia P."/>
            <person name="Rowley D."/>
            <person name="Amedeo P."/>
            <person name="Bruno D."/>
            <person name="Vamathevan J."/>
            <person name="Miranda M."/>
            <person name="Anderson I.J."/>
            <person name="Fraser J.A."/>
            <person name="Allen J.E."/>
            <person name="Bosdet I.E."/>
            <person name="Brent M.R."/>
            <person name="Chiu R."/>
            <person name="Doering T.L."/>
            <person name="Donlin M.J."/>
            <person name="D'Souza C.A."/>
            <person name="Fox D.S."/>
            <person name="Grinberg V."/>
            <person name="Fu J."/>
            <person name="Fukushima M."/>
            <person name="Haas B.J."/>
            <person name="Huang J.C."/>
            <person name="Janbon G."/>
            <person name="Jones S.J.M."/>
            <person name="Koo H.L."/>
            <person name="Krzywinski M.I."/>
            <person name="Kwon-Chung K.J."/>
            <person name="Lengeler K.B."/>
            <person name="Maiti R."/>
            <person name="Marra M.A."/>
            <person name="Marra R.E."/>
            <person name="Mathewson C.A."/>
            <person name="Mitchell T.G."/>
            <person name="Pertea M."/>
            <person name="Riggs F.R."/>
            <person name="Salzberg S.L."/>
            <person name="Schein J.E."/>
            <person name="Shvartsbeyn A."/>
            <person name="Shin H."/>
            <person name="Shumway M."/>
            <person name="Specht C.A."/>
            <person name="Suh B.B."/>
            <person name="Tenney A."/>
            <person name="Utterback T.R."/>
            <person name="Wickes B.L."/>
            <person name="Wortman J.R."/>
            <person name="Wye N.H."/>
            <person name="Kronstad J.W."/>
            <person name="Lodge J.K."/>
            <person name="Heitman J."/>
            <person name="Davis R.W."/>
            <person name="Fraser C.M."/>
            <person name="Hyman R.W."/>
        </authorList>
    </citation>
    <scope>NUCLEOTIDE SEQUENCE [LARGE SCALE GENOMIC DNA]</scope>
    <source>
        <strain>B-3501A</strain>
    </source>
</reference>